<feature type="chain" id="PRO_1000057637" description="DNA mismatch repair protein MutS">
    <location>
        <begin position="1"/>
        <end position="851"/>
    </location>
</feature>
<feature type="binding site" evidence="1">
    <location>
        <begin position="614"/>
        <end position="621"/>
    </location>
    <ligand>
        <name>ATP</name>
        <dbReference type="ChEBI" id="CHEBI:30616"/>
    </ligand>
</feature>
<protein>
    <recommendedName>
        <fullName evidence="1">DNA mismatch repair protein MutS</fullName>
    </recommendedName>
</protein>
<reference key="1">
    <citation type="submission" date="2007-09" db="EMBL/GenBank/DDBJ databases">
        <title>Complete sequence of chromosome of Serratia proteamaculans 568.</title>
        <authorList>
            <consortium name="US DOE Joint Genome Institute"/>
            <person name="Copeland A."/>
            <person name="Lucas S."/>
            <person name="Lapidus A."/>
            <person name="Barry K."/>
            <person name="Glavina del Rio T."/>
            <person name="Dalin E."/>
            <person name="Tice H."/>
            <person name="Pitluck S."/>
            <person name="Chain P."/>
            <person name="Malfatti S."/>
            <person name="Shin M."/>
            <person name="Vergez L."/>
            <person name="Schmutz J."/>
            <person name="Larimer F."/>
            <person name="Land M."/>
            <person name="Hauser L."/>
            <person name="Kyrpides N."/>
            <person name="Kim E."/>
            <person name="Taghavi S."/>
            <person name="Newman L."/>
            <person name="Vangronsveld J."/>
            <person name="van der Lelie D."/>
            <person name="Richardson P."/>
        </authorList>
    </citation>
    <scope>NUCLEOTIDE SEQUENCE [LARGE SCALE GENOMIC DNA]</scope>
    <source>
        <strain>568</strain>
    </source>
</reference>
<organism>
    <name type="scientific">Serratia proteamaculans (strain 568)</name>
    <dbReference type="NCBI Taxonomy" id="399741"/>
    <lineage>
        <taxon>Bacteria</taxon>
        <taxon>Pseudomonadati</taxon>
        <taxon>Pseudomonadota</taxon>
        <taxon>Gammaproteobacteria</taxon>
        <taxon>Enterobacterales</taxon>
        <taxon>Yersiniaceae</taxon>
        <taxon>Serratia</taxon>
    </lineage>
</organism>
<dbReference type="EMBL" id="CP000826">
    <property type="protein sequence ID" value="ABV39939.1"/>
    <property type="molecule type" value="Genomic_DNA"/>
</dbReference>
<dbReference type="SMR" id="A8G9Z9"/>
<dbReference type="STRING" id="399741.Spro_0833"/>
<dbReference type="KEGG" id="spe:Spro_0833"/>
<dbReference type="eggNOG" id="COG0249">
    <property type="taxonomic scope" value="Bacteria"/>
</dbReference>
<dbReference type="HOGENOM" id="CLU_002472_4_1_6"/>
<dbReference type="OrthoDB" id="9802448at2"/>
<dbReference type="GO" id="GO:0005829">
    <property type="term" value="C:cytosol"/>
    <property type="evidence" value="ECO:0007669"/>
    <property type="project" value="TreeGrafter"/>
</dbReference>
<dbReference type="GO" id="GO:0005524">
    <property type="term" value="F:ATP binding"/>
    <property type="evidence" value="ECO:0007669"/>
    <property type="project" value="UniProtKB-UniRule"/>
</dbReference>
<dbReference type="GO" id="GO:0140664">
    <property type="term" value="F:ATP-dependent DNA damage sensor activity"/>
    <property type="evidence" value="ECO:0007669"/>
    <property type="project" value="InterPro"/>
</dbReference>
<dbReference type="GO" id="GO:0003684">
    <property type="term" value="F:damaged DNA binding"/>
    <property type="evidence" value="ECO:0007669"/>
    <property type="project" value="UniProtKB-UniRule"/>
</dbReference>
<dbReference type="GO" id="GO:0030983">
    <property type="term" value="F:mismatched DNA binding"/>
    <property type="evidence" value="ECO:0007669"/>
    <property type="project" value="InterPro"/>
</dbReference>
<dbReference type="GO" id="GO:0006298">
    <property type="term" value="P:mismatch repair"/>
    <property type="evidence" value="ECO:0007669"/>
    <property type="project" value="UniProtKB-UniRule"/>
</dbReference>
<dbReference type="CDD" id="cd03284">
    <property type="entry name" value="ABC_MutS1"/>
    <property type="match status" value="1"/>
</dbReference>
<dbReference type="FunFam" id="1.10.1420.10:FF:000002">
    <property type="entry name" value="DNA mismatch repair protein MutS"/>
    <property type="match status" value="1"/>
</dbReference>
<dbReference type="FunFam" id="3.30.420.110:FF:000001">
    <property type="entry name" value="DNA mismatch repair protein MutS"/>
    <property type="match status" value="1"/>
</dbReference>
<dbReference type="FunFam" id="3.40.1170.10:FF:000001">
    <property type="entry name" value="DNA mismatch repair protein MutS"/>
    <property type="match status" value="1"/>
</dbReference>
<dbReference type="FunFam" id="3.40.50.300:FF:000283">
    <property type="entry name" value="DNA mismatch repair protein MutS"/>
    <property type="match status" value="1"/>
</dbReference>
<dbReference type="Gene3D" id="1.10.1420.10">
    <property type="match status" value="2"/>
</dbReference>
<dbReference type="Gene3D" id="6.10.140.430">
    <property type="match status" value="1"/>
</dbReference>
<dbReference type="Gene3D" id="3.40.1170.10">
    <property type="entry name" value="DNA repair protein MutS, domain I"/>
    <property type="match status" value="1"/>
</dbReference>
<dbReference type="Gene3D" id="3.30.420.110">
    <property type="entry name" value="MutS, connector domain"/>
    <property type="match status" value="1"/>
</dbReference>
<dbReference type="Gene3D" id="3.40.50.300">
    <property type="entry name" value="P-loop containing nucleotide triphosphate hydrolases"/>
    <property type="match status" value="1"/>
</dbReference>
<dbReference type="HAMAP" id="MF_00096">
    <property type="entry name" value="MutS"/>
    <property type="match status" value="1"/>
</dbReference>
<dbReference type="InterPro" id="IPR005748">
    <property type="entry name" value="DNA_mismatch_repair_MutS"/>
</dbReference>
<dbReference type="InterPro" id="IPR007695">
    <property type="entry name" value="DNA_mismatch_repair_MutS-lik_N"/>
</dbReference>
<dbReference type="InterPro" id="IPR017261">
    <property type="entry name" value="DNA_mismatch_repair_MutS/MSH"/>
</dbReference>
<dbReference type="InterPro" id="IPR000432">
    <property type="entry name" value="DNA_mismatch_repair_MutS_C"/>
</dbReference>
<dbReference type="InterPro" id="IPR007861">
    <property type="entry name" value="DNA_mismatch_repair_MutS_clamp"/>
</dbReference>
<dbReference type="InterPro" id="IPR007696">
    <property type="entry name" value="DNA_mismatch_repair_MutS_core"/>
</dbReference>
<dbReference type="InterPro" id="IPR016151">
    <property type="entry name" value="DNA_mismatch_repair_MutS_N"/>
</dbReference>
<dbReference type="InterPro" id="IPR036187">
    <property type="entry name" value="DNA_mismatch_repair_MutS_sf"/>
</dbReference>
<dbReference type="InterPro" id="IPR007860">
    <property type="entry name" value="DNA_mmatch_repair_MutS_con_dom"/>
</dbReference>
<dbReference type="InterPro" id="IPR045076">
    <property type="entry name" value="MutS"/>
</dbReference>
<dbReference type="InterPro" id="IPR036678">
    <property type="entry name" value="MutS_con_dom_sf"/>
</dbReference>
<dbReference type="InterPro" id="IPR027417">
    <property type="entry name" value="P-loop_NTPase"/>
</dbReference>
<dbReference type="NCBIfam" id="TIGR01070">
    <property type="entry name" value="mutS1"/>
    <property type="match status" value="1"/>
</dbReference>
<dbReference type="NCBIfam" id="NF003810">
    <property type="entry name" value="PRK05399.1"/>
    <property type="match status" value="1"/>
</dbReference>
<dbReference type="PANTHER" id="PTHR11361:SF34">
    <property type="entry name" value="DNA MISMATCH REPAIR PROTEIN MSH1, MITOCHONDRIAL"/>
    <property type="match status" value="1"/>
</dbReference>
<dbReference type="PANTHER" id="PTHR11361">
    <property type="entry name" value="DNA MISMATCH REPAIR PROTEIN MUTS FAMILY MEMBER"/>
    <property type="match status" value="1"/>
</dbReference>
<dbReference type="Pfam" id="PF01624">
    <property type="entry name" value="MutS_I"/>
    <property type="match status" value="1"/>
</dbReference>
<dbReference type="Pfam" id="PF05188">
    <property type="entry name" value="MutS_II"/>
    <property type="match status" value="1"/>
</dbReference>
<dbReference type="Pfam" id="PF05192">
    <property type="entry name" value="MutS_III"/>
    <property type="match status" value="1"/>
</dbReference>
<dbReference type="Pfam" id="PF05190">
    <property type="entry name" value="MutS_IV"/>
    <property type="match status" value="1"/>
</dbReference>
<dbReference type="Pfam" id="PF00488">
    <property type="entry name" value="MutS_V"/>
    <property type="match status" value="1"/>
</dbReference>
<dbReference type="PIRSF" id="PIRSF037677">
    <property type="entry name" value="DNA_mis_repair_Msh6"/>
    <property type="match status" value="1"/>
</dbReference>
<dbReference type="SMART" id="SM00534">
    <property type="entry name" value="MUTSac"/>
    <property type="match status" value="1"/>
</dbReference>
<dbReference type="SMART" id="SM00533">
    <property type="entry name" value="MUTSd"/>
    <property type="match status" value="1"/>
</dbReference>
<dbReference type="SUPFAM" id="SSF55271">
    <property type="entry name" value="DNA repair protein MutS, domain I"/>
    <property type="match status" value="1"/>
</dbReference>
<dbReference type="SUPFAM" id="SSF53150">
    <property type="entry name" value="DNA repair protein MutS, domain II"/>
    <property type="match status" value="1"/>
</dbReference>
<dbReference type="SUPFAM" id="SSF48334">
    <property type="entry name" value="DNA repair protein MutS, domain III"/>
    <property type="match status" value="1"/>
</dbReference>
<dbReference type="SUPFAM" id="SSF52540">
    <property type="entry name" value="P-loop containing nucleoside triphosphate hydrolases"/>
    <property type="match status" value="1"/>
</dbReference>
<dbReference type="PROSITE" id="PS00486">
    <property type="entry name" value="DNA_MISMATCH_REPAIR_2"/>
    <property type="match status" value="1"/>
</dbReference>
<accession>A8G9Z9</accession>
<name>MUTS_SERP5</name>
<proteinExistence type="inferred from homology"/>
<comment type="function">
    <text evidence="1">This protein is involved in the repair of mismatches in DNA. It is possible that it carries out the mismatch recognition step. This protein has a weak ATPase activity.</text>
</comment>
<comment type="similarity">
    <text evidence="1">Belongs to the DNA mismatch repair MutS family.</text>
</comment>
<evidence type="ECO:0000255" key="1">
    <source>
        <dbReference type="HAMAP-Rule" id="MF_00096"/>
    </source>
</evidence>
<keyword id="KW-0067">ATP-binding</keyword>
<keyword id="KW-0227">DNA damage</keyword>
<keyword id="KW-0234">DNA repair</keyword>
<keyword id="KW-0238">DNA-binding</keyword>
<keyword id="KW-0547">Nucleotide-binding</keyword>
<gene>
    <name evidence="1" type="primary">mutS</name>
    <name type="ordered locus">Spro_0833</name>
</gene>
<sequence>MNSTDKLDSHTPMMQQYLRLKAQHPEILLFYRMGDFYELFYDDAKRASQLLDISLTKRGASAGEPIPMAGVPHHAVENYLAKLVQLGESVALCEQIGDPATSKGPVERKVVRIVTPGTITDEALLQERQDNLLAAIWQDARGFGYATLDISSGRFRVAEPADIETMAAELQRTNPAELLYPETFEQMSLIEQRHGLRRRPLWEFEPETARQQLNLQFGTRDLTGFGVEQAHQALRAAGCLLQYVKDTQRTSLPHIRGITMERQQDGIIMDAATRRNLELTQNLSGGSENTLAAILDRSVTAMGSRMLKRWLHMPTRDIKVLNNRQQAIGSLQDLYSDLQPSLRQVGDLERILARLALRSARPRDLARMRHAFQQLPDIHALLKGVETPYVQQLLSQVGQFDELQDLLERAVVEAPPVLVRDGGVIAPGYNSELDEWRALADGATDYLDRLEIREREKLGLDTLKVGFNGVHGYYIQVSRGQSHLVPIHYVRRQTLKNAERYIIPELKEYEDKVLTSKGKALAIEKGLYEELFDLLLPHLGDLQQSAAALAELDVLANLAERAETLNYACPTISEQPGVRITEGRHPVVEQVLSEPFISNPLSLSPQRRMLIITGPNMGGKSTYMRQTALIVLMAHIGSYVPASKAVIGPVDRIFTRVGAADDLASGRSTFMVEMTETANILHNATENSLVLMDEIGRGTSTYDGLSLAWACAENLASRIKAMTLFATHYFELTTLPEKMEGVVNVHLDALEHGDTIAFMHSVQDGAASKSYGLAVAALAGVPREVIKRARQKLRELEAISSHTATGTVDATQMTLLNEETSPAVEALEALDPDSLSPRQALEWIYRLKNMV</sequence>